<comment type="function">
    <text evidence="1">Cell wall formation. Catalyzes the transfer of a GlcNAc subunit on undecaprenyl-pyrophosphoryl-MurNAc-pentapeptide (lipid intermediate I) to form undecaprenyl-pyrophosphoryl-MurNAc-(pentapeptide)GlcNAc (lipid intermediate II).</text>
</comment>
<comment type="catalytic activity">
    <reaction evidence="1">
        <text>di-trans,octa-cis-undecaprenyl diphospho-N-acetyl-alpha-D-muramoyl-L-alanyl-D-glutamyl-meso-2,6-diaminopimeloyl-D-alanyl-D-alanine + UDP-N-acetyl-alpha-D-glucosamine = di-trans,octa-cis-undecaprenyl diphospho-[N-acetyl-alpha-D-glucosaminyl-(1-&gt;4)]-N-acetyl-alpha-D-muramoyl-L-alanyl-D-glutamyl-meso-2,6-diaminopimeloyl-D-alanyl-D-alanine + UDP + H(+)</text>
        <dbReference type="Rhea" id="RHEA:31227"/>
        <dbReference type="ChEBI" id="CHEBI:15378"/>
        <dbReference type="ChEBI" id="CHEBI:57705"/>
        <dbReference type="ChEBI" id="CHEBI:58223"/>
        <dbReference type="ChEBI" id="CHEBI:61387"/>
        <dbReference type="ChEBI" id="CHEBI:61388"/>
        <dbReference type="EC" id="2.4.1.227"/>
    </reaction>
</comment>
<comment type="pathway">
    <text evidence="1">Cell wall biogenesis; peptidoglycan biosynthesis.</text>
</comment>
<comment type="subcellular location">
    <subcellularLocation>
        <location evidence="1">Cell inner membrane</location>
        <topology evidence="1">Peripheral membrane protein</topology>
        <orientation evidence="1">Cytoplasmic side</orientation>
    </subcellularLocation>
</comment>
<comment type="similarity">
    <text evidence="1">Belongs to the glycosyltransferase 28 family. MurG subfamily.</text>
</comment>
<proteinExistence type="inferred from homology"/>
<organism>
    <name type="scientific">Cereibacter sphaeroides (strain ATCC 17029 / ATH 2.4.9)</name>
    <name type="common">Rhodobacter sphaeroides</name>
    <dbReference type="NCBI Taxonomy" id="349101"/>
    <lineage>
        <taxon>Bacteria</taxon>
        <taxon>Pseudomonadati</taxon>
        <taxon>Pseudomonadota</taxon>
        <taxon>Alphaproteobacteria</taxon>
        <taxon>Rhodobacterales</taxon>
        <taxon>Paracoccaceae</taxon>
        <taxon>Cereibacter</taxon>
    </lineage>
</organism>
<evidence type="ECO:0000255" key="1">
    <source>
        <dbReference type="HAMAP-Rule" id="MF_00033"/>
    </source>
</evidence>
<sequence length="364" mass="38313">MGRPLLLIAAGGTGGHMFPAQALAEAMVRRGWRVKLSTDARGARYAGGFPHVVEIEEVSSATFARGGPLAKALVPLRIAGGVASAVAGFLRDRPSVVVGFGGYPSIPALSAAVALRLPRMIHEQNGVLGRVNRLFAPRVQAVCCGTWPTDLPEGVEGYYTGNPVRAAVLERAAAPYIVPGDYPMSLVVIGGSQGARVLSDVVPEAIARLPEQILANLRIAHQAREEDVARVTEAYDRAGLLAEVKTFFTDIPRRLSEAQLVISRSGASSVADISIIGRPAILVPFAAATADHQTANARGLVEAEAAILIPESALDPAALSEHIAAVLSQPDAARQMARNALAHGRPDATERLVEVVEHLARKET</sequence>
<reference key="1">
    <citation type="submission" date="2007-02" db="EMBL/GenBank/DDBJ databases">
        <title>Complete sequence of chromosome 1 of Rhodobacter sphaeroides ATCC 17029.</title>
        <authorList>
            <person name="Copeland A."/>
            <person name="Lucas S."/>
            <person name="Lapidus A."/>
            <person name="Barry K."/>
            <person name="Detter J.C."/>
            <person name="Glavina del Rio T."/>
            <person name="Hammon N."/>
            <person name="Israni S."/>
            <person name="Dalin E."/>
            <person name="Tice H."/>
            <person name="Pitluck S."/>
            <person name="Kiss H."/>
            <person name="Brettin T."/>
            <person name="Bruce D."/>
            <person name="Han C."/>
            <person name="Tapia R."/>
            <person name="Gilna P."/>
            <person name="Schmutz J."/>
            <person name="Larimer F."/>
            <person name="Land M."/>
            <person name="Hauser L."/>
            <person name="Kyrpides N."/>
            <person name="Mikhailova N."/>
            <person name="Richardson P."/>
            <person name="Mackenzie C."/>
            <person name="Choudhary M."/>
            <person name="Donohue T.J."/>
            <person name="Kaplan S."/>
        </authorList>
    </citation>
    <scope>NUCLEOTIDE SEQUENCE [LARGE SCALE GENOMIC DNA]</scope>
    <source>
        <strain>ATCC 17029 / ATH 2.4.9</strain>
    </source>
</reference>
<feature type="chain" id="PRO_0000315149" description="UDP-N-acetylglucosamine--N-acetylmuramyl-(pentapeptide) pyrophosphoryl-undecaprenol N-acetylglucosamine transferase">
    <location>
        <begin position="1"/>
        <end position="364"/>
    </location>
</feature>
<feature type="binding site" evidence="1">
    <location>
        <begin position="13"/>
        <end position="15"/>
    </location>
    <ligand>
        <name>UDP-N-acetyl-alpha-D-glucosamine</name>
        <dbReference type="ChEBI" id="CHEBI:57705"/>
    </ligand>
</feature>
<feature type="binding site" evidence="1">
    <location>
        <position position="125"/>
    </location>
    <ligand>
        <name>UDP-N-acetyl-alpha-D-glucosamine</name>
        <dbReference type="ChEBI" id="CHEBI:57705"/>
    </ligand>
</feature>
<feature type="binding site" evidence="1">
    <location>
        <position position="165"/>
    </location>
    <ligand>
        <name>UDP-N-acetyl-alpha-D-glucosamine</name>
        <dbReference type="ChEBI" id="CHEBI:57705"/>
    </ligand>
</feature>
<feature type="binding site" evidence="1">
    <location>
        <position position="192"/>
    </location>
    <ligand>
        <name>UDP-N-acetyl-alpha-D-glucosamine</name>
        <dbReference type="ChEBI" id="CHEBI:57705"/>
    </ligand>
</feature>
<feature type="binding site" evidence="1">
    <location>
        <position position="293"/>
    </location>
    <ligand>
        <name>UDP-N-acetyl-alpha-D-glucosamine</name>
        <dbReference type="ChEBI" id="CHEBI:57705"/>
    </ligand>
</feature>
<accession>A3PHS8</accession>
<protein>
    <recommendedName>
        <fullName evidence="1">UDP-N-acetylglucosamine--N-acetylmuramyl-(pentapeptide) pyrophosphoryl-undecaprenol N-acetylglucosamine transferase</fullName>
        <ecNumber evidence="1">2.4.1.227</ecNumber>
    </recommendedName>
    <alternativeName>
        <fullName evidence="1">Undecaprenyl-PP-MurNAc-pentapeptide-UDPGlcNAc GlcNAc transferase</fullName>
    </alternativeName>
</protein>
<gene>
    <name evidence="1" type="primary">murG</name>
    <name type="ordered locus">Rsph17029_0783</name>
</gene>
<keyword id="KW-0131">Cell cycle</keyword>
<keyword id="KW-0132">Cell division</keyword>
<keyword id="KW-0997">Cell inner membrane</keyword>
<keyword id="KW-1003">Cell membrane</keyword>
<keyword id="KW-0133">Cell shape</keyword>
<keyword id="KW-0961">Cell wall biogenesis/degradation</keyword>
<keyword id="KW-0328">Glycosyltransferase</keyword>
<keyword id="KW-0472">Membrane</keyword>
<keyword id="KW-0573">Peptidoglycan synthesis</keyword>
<keyword id="KW-0808">Transferase</keyword>
<dbReference type="EC" id="2.4.1.227" evidence="1"/>
<dbReference type="EMBL" id="CP000577">
    <property type="protein sequence ID" value="ABN75894.1"/>
    <property type="molecule type" value="Genomic_DNA"/>
</dbReference>
<dbReference type="RefSeq" id="WP_011840601.1">
    <property type="nucleotide sequence ID" value="NC_009049.1"/>
</dbReference>
<dbReference type="SMR" id="A3PHS8"/>
<dbReference type="CAZy" id="GT28">
    <property type="family name" value="Glycosyltransferase Family 28"/>
</dbReference>
<dbReference type="KEGG" id="rsh:Rsph17029_0783"/>
<dbReference type="HOGENOM" id="CLU_037404_2_1_5"/>
<dbReference type="UniPathway" id="UPA00219"/>
<dbReference type="GO" id="GO:0005886">
    <property type="term" value="C:plasma membrane"/>
    <property type="evidence" value="ECO:0007669"/>
    <property type="project" value="UniProtKB-SubCell"/>
</dbReference>
<dbReference type="GO" id="GO:0051991">
    <property type="term" value="F:UDP-N-acetyl-D-glucosamine:N-acetylmuramoyl-L-alanyl-D-glutamyl-meso-2,6-diaminopimelyl-D-alanyl-D-alanine-diphosphoundecaprenol 4-beta-N-acetylglucosaminlytransferase activity"/>
    <property type="evidence" value="ECO:0007669"/>
    <property type="project" value="RHEA"/>
</dbReference>
<dbReference type="GO" id="GO:0050511">
    <property type="term" value="F:undecaprenyldiphospho-muramoylpentapeptide beta-N-acetylglucosaminyltransferase activity"/>
    <property type="evidence" value="ECO:0007669"/>
    <property type="project" value="UniProtKB-UniRule"/>
</dbReference>
<dbReference type="GO" id="GO:0005975">
    <property type="term" value="P:carbohydrate metabolic process"/>
    <property type="evidence" value="ECO:0007669"/>
    <property type="project" value="InterPro"/>
</dbReference>
<dbReference type="GO" id="GO:0051301">
    <property type="term" value="P:cell division"/>
    <property type="evidence" value="ECO:0007669"/>
    <property type="project" value="UniProtKB-KW"/>
</dbReference>
<dbReference type="GO" id="GO:0071555">
    <property type="term" value="P:cell wall organization"/>
    <property type="evidence" value="ECO:0007669"/>
    <property type="project" value="UniProtKB-KW"/>
</dbReference>
<dbReference type="GO" id="GO:0030259">
    <property type="term" value="P:lipid glycosylation"/>
    <property type="evidence" value="ECO:0007669"/>
    <property type="project" value="UniProtKB-UniRule"/>
</dbReference>
<dbReference type="GO" id="GO:0009252">
    <property type="term" value="P:peptidoglycan biosynthetic process"/>
    <property type="evidence" value="ECO:0007669"/>
    <property type="project" value="UniProtKB-UniRule"/>
</dbReference>
<dbReference type="GO" id="GO:0008360">
    <property type="term" value="P:regulation of cell shape"/>
    <property type="evidence" value="ECO:0007669"/>
    <property type="project" value="UniProtKB-KW"/>
</dbReference>
<dbReference type="CDD" id="cd03785">
    <property type="entry name" value="GT28_MurG"/>
    <property type="match status" value="1"/>
</dbReference>
<dbReference type="Gene3D" id="3.40.50.2000">
    <property type="entry name" value="Glycogen Phosphorylase B"/>
    <property type="match status" value="2"/>
</dbReference>
<dbReference type="HAMAP" id="MF_00033">
    <property type="entry name" value="MurG"/>
    <property type="match status" value="1"/>
</dbReference>
<dbReference type="InterPro" id="IPR006009">
    <property type="entry name" value="GlcNAc_MurG"/>
</dbReference>
<dbReference type="InterPro" id="IPR007235">
    <property type="entry name" value="Glyco_trans_28_C"/>
</dbReference>
<dbReference type="InterPro" id="IPR004276">
    <property type="entry name" value="GlycoTrans_28_N"/>
</dbReference>
<dbReference type="PANTHER" id="PTHR21015:SF22">
    <property type="entry name" value="GLYCOSYLTRANSFERASE"/>
    <property type="match status" value="1"/>
</dbReference>
<dbReference type="PANTHER" id="PTHR21015">
    <property type="entry name" value="UDP-N-ACETYLGLUCOSAMINE--N-ACETYLMURAMYL-(PENTAPEPTIDE) PYROPHOSPHORYL-UNDECAPRENOL N-ACETYLGLUCOSAMINE TRANSFERASE 1"/>
    <property type="match status" value="1"/>
</dbReference>
<dbReference type="Pfam" id="PF04101">
    <property type="entry name" value="Glyco_tran_28_C"/>
    <property type="match status" value="1"/>
</dbReference>
<dbReference type="Pfam" id="PF03033">
    <property type="entry name" value="Glyco_transf_28"/>
    <property type="match status" value="1"/>
</dbReference>
<dbReference type="SUPFAM" id="SSF53756">
    <property type="entry name" value="UDP-Glycosyltransferase/glycogen phosphorylase"/>
    <property type="match status" value="1"/>
</dbReference>
<name>MURG_CERS1</name>